<name>LMUB_BACX1</name>
<dbReference type="EMBL" id="LNQK01000012">
    <property type="protein sequence ID" value="KSU69240.1"/>
    <property type="molecule type" value="Genomic_DNA"/>
</dbReference>
<dbReference type="SMR" id="P0DW44"/>
<dbReference type="GO" id="GO:0016787">
    <property type="term" value="F:hydrolase activity"/>
    <property type="evidence" value="ECO:0007669"/>
    <property type="project" value="UniProtKB-KW"/>
</dbReference>
<dbReference type="GO" id="GO:0051607">
    <property type="term" value="P:defense response to virus"/>
    <property type="evidence" value="ECO:0007669"/>
    <property type="project" value="UniProtKB-KW"/>
</dbReference>
<dbReference type="Gene3D" id="3.40.50.300">
    <property type="entry name" value="P-loop containing nucleotide triphosphate hydrolases"/>
    <property type="match status" value="1"/>
</dbReference>
<dbReference type="InterPro" id="IPR027417">
    <property type="entry name" value="P-loop_NTPase"/>
</dbReference>
<feature type="chain" id="PRO_0000456378" description="Lamassu protein LmuB">
    <location>
        <begin position="1"/>
        <end position="562"/>
    </location>
</feature>
<gene>
    <name evidence="2" type="primary">lmuB</name>
    <name type="ORF">AS035_15075</name>
</gene>
<proteinExistence type="predicted"/>
<reference key="1">
    <citation type="submission" date="2015-11" db="EMBL/GenBank/DDBJ databases">
        <authorList>
            <person name="Dastager S.G."/>
            <person name="Mawlankar R.B."/>
            <person name="Thorat M.N."/>
            <person name="Jiao J.-Y."/>
            <person name="Sonalkar V."/>
            <person name="Li W.-J."/>
        </authorList>
    </citation>
    <scope>NUCLEOTIDE SEQUENCE [LARGE SCALE GENOMIC DNA]</scope>
    <source>
        <strain>NCIM 5461 / CCTCC AB 2011126 / NIO-1130</strain>
    </source>
</reference>
<reference key="2">
    <citation type="journal article" date="2018" name="Science">
        <title>Systematic discovery of antiphage defense systems in the microbial pangenome.</title>
        <authorList>
            <person name="Doron S."/>
            <person name="Melamed S."/>
            <person name="Ofir G."/>
            <person name="Leavitt A."/>
            <person name="Lopatina A."/>
            <person name="Keren M."/>
            <person name="Amitai G."/>
            <person name="Sorek R."/>
        </authorList>
    </citation>
    <scope>FUNCTION</scope>
    <scope>DISRUPTION PHENOTYPE</scope>
    <scope>EXPRESSION IN B.SUBTILIS</scope>
    <source>
        <strain>NCIM 5461 / CCTCC AB 2011126 / NIO-1130</strain>
    </source>
</reference>
<sequence>MIIIAFSILDFKNKEAQNFDFKAGTNLIVSKGNTKGKSSLLKSMYYTLGFDVHQFPSNWNINFMYFQIEVLINNVKYNITRQKNIFRVSDVEVPLNVKEYSEWLQHKLEIKMQLANTHTKHLYEAYSSAVILPFYIDQDDSWDGGIYRNVTNTLNQYTRIPADIFKSVFNLSNYELLELQNSLTNYSKEKNTVVSTIKSLLNVLEDYRHENADVPTVSKIDKIALNKDIDRYLQMQNELNEQIVKYKMKLLNKQEMLDLQKQELSELEQLLKMNKKRYNSIETECQYCHSKLTKEQSLTRLDLSNNYFEISLLKEEIEKEVVKLTNEIIIFESQQNSIESKIDEIHRRIQNSKDLLTIDDYVKATAKKEASNELESLVDKQVLSKYNLEEKIKVLRREINKLKKEKESLREIIERDYTDLVFEIKKVLNDLNDTKLDLSELNLDELKFLEFKKISGSGMDKNKKFLAYYLIYFSLLRKYSSYIIPFCMDSFIKNEITGETAKKMFEAIEKYFFDTNQSFFSIVSENLKHLEFVDSYNKINVEGKLLVRDKYDEIALKFKFDS</sequence>
<protein>
    <recommendedName>
        <fullName evidence="2">Lamassu protein LmuB</fullName>
    </recommendedName>
    <alternativeName>
        <fullName evidence="4">Putative ATPase LmuB</fullName>
    </alternativeName>
</protein>
<evidence type="ECO:0000269" key="1">
    <source>
    </source>
</evidence>
<evidence type="ECO:0000303" key="2">
    <source>
    </source>
</evidence>
<evidence type="ECO:0000305" key="3"/>
<evidence type="ECO:0000305" key="4">
    <source>
    </source>
</evidence>
<comment type="function">
    <text evidence="1 3">Component of antiviral defense system Lamassu type I, composed of LmuA and LmuB. Expression of Lamassu type I in B.subtilis (strain BEST7003) confers resistance to phages phi3T, SpBeta and SPR (PubMed:29371424). May be an ATPase (Probable).</text>
</comment>
<comment type="disruption phenotype">
    <text evidence="1">When this gene is missing the Lamassu type I system does not confer resistance to SpBeta in B.subtilis.</text>
</comment>
<organism>
    <name type="scientific">Bacillus sp. (strain NCIM 5461 / CCTCC AB 2011126 / NIO-1130)</name>
    <dbReference type="NCBI Taxonomy" id="1761765"/>
    <lineage>
        <taxon>Bacteria</taxon>
        <taxon>Bacillati</taxon>
        <taxon>Bacillota</taxon>
        <taxon>Bacilli</taxon>
        <taxon>Bacillales</taxon>
        <taxon>Bacillaceae</taxon>
        <taxon>Bacillus</taxon>
    </lineage>
</organism>
<keyword id="KW-0051">Antiviral defense</keyword>
<keyword id="KW-0378">Hydrolase</keyword>
<accession>P0DW44</accession>